<comment type="function">
    <text evidence="1">Involved in peptide bond synthesis. Stimulates efficient translation and peptide-bond synthesis on native or reconstituted 70S ribosomes in vitro. Probably functions indirectly by altering the affinity of the ribosome for aminoacyl-tRNA, thus increasing their reactivity as acceptors for peptidyl transferase.</text>
</comment>
<comment type="pathway">
    <text evidence="1">Protein biosynthesis; polypeptide chain elongation.</text>
</comment>
<comment type="subcellular location">
    <subcellularLocation>
        <location evidence="1">Cytoplasm</location>
    </subcellularLocation>
</comment>
<comment type="similarity">
    <text evidence="1">Belongs to the elongation factor P family.</text>
</comment>
<dbReference type="EMBL" id="CP001130">
    <property type="protein sequence ID" value="ACG57046.1"/>
    <property type="molecule type" value="Genomic_DNA"/>
</dbReference>
<dbReference type="RefSeq" id="WP_012513402.1">
    <property type="nucleotide sequence ID" value="NC_011126.1"/>
</dbReference>
<dbReference type="SMR" id="B4U7D5"/>
<dbReference type="STRING" id="380749.HY04AAS1_0356"/>
<dbReference type="KEGG" id="hya:HY04AAS1_0356"/>
<dbReference type="eggNOG" id="COG0231">
    <property type="taxonomic scope" value="Bacteria"/>
</dbReference>
<dbReference type="HOGENOM" id="CLU_074944_0_1_0"/>
<dbReference type="OrthoDB" id="9801844at2"/>
<dbReference type="UniPathway" id="UPA00345"/>
<dbReference type="GO" id="GO:0005737">
    <property type="term" value="C:cytoplasm"/>
    <property type="evidence" value="ECO:0007669"/>
    <property type="project" value="UniProtKB-SubCell"/>
</dbReference>
<dbReference type="GO" id="GO:0003746">
    <property type="term" value="F:translation elongation factor activity"/>
    <property type="evidence" value="ECO:0007669"/>
    <property type="project" value="UniProtKB-UniRule"/>
</dbReference>
<dbReference type="GO" id="GO:0043043">
    <property type="term" value="P:peptide biosynthetic process"/>
    <property type="evidence" value="ECO:0007669"/>
    <property type="project" value="InterPro"/>
</dbReference>
<dbReference type="CDD" id="cd04470">
    <property type="entry name" value="S1_EF-P_repeat_1"/>
    <property type="match status" value="1"/>
</dbReference>
<dbReference type="CDD" id="cd05794">
    <property type="entry name" value="S1_EF-P_repeat_2"/>
    <property type="match status" value="1"/>
</dbReference>
<dbReference type="FunFam" id="2.30.30.30:FF:000003">
    <property type="entry name" value="Elongation factor P"/>
    <property type="match status" value="1"/>
</dbReference>
<dbReference type="FunFam" id="2.40.50.140:FF:000004">
    <property type="entry name" value="Elongation factor P"/>
    <property type="match status" value="1"/>
</dbReference>
<dbReference type="FunFam" id="2.40.50.140:FF:000009">
    <property type="entry name" value="Elongation factor P"/>
    <property type="match status" value="1"/>
</dbReference>
<dbReference type="Gene3D" id="2.30.30.30">
    <property type="match status" value="1"/>
</dbReference>
<dbReference type="Gene3D" id="2.40.50.140">
    <property type="entry name" value="Nucleic acid-binding proteins"/>
    <property type="match status" value="2"/>
</dbReference>
<dbReference type="HAMAP" id="MF_00141">
    <property type="entry name" value="EF_P"/>
    <property type="match status" value="1"/>
</dbReference>
<dbReference type="InterPro" id="IPR015365">
    <property type="entry name" value="Elong-fact-P_C"/>
</dbReference>
<dbReference type="InterPro" id="IPR012340">
    <property type="entry name" value="NA-bd_OB-fold"/>
</dbReference>
<dbReference type="InterPro" id="IPR014722">
    <property type="entry name" value="Rib_uL2_dom2"/>
</dbReference>
<dbReference type="InterPro" id="IPR020599">
    <property type="entry name" value="Transl_elong_fac_P/YeiP"/>
</dbReference>
<dbReference type="InterPro" id="IPR013185">
    <property type="entry name" value="Transl_elong_KOW-like"/>
</dbReference>
<dbReference type="InterPro" id="IPR001059">
    <property type="entry name" value="Transl_elong_P/YeiP_cen"/>
</dbReference>
<dbReference type="InterPro" id="IPR013852">
    <property type="entry name" value="Transl_elong_P/YeiP_CS"/>
</dbReference>
<dbReference type="InterPro" id="IPR011768">
    <property type="entry name" value="Transl_elongation_fac_P"/>
</dbReference>
<dbReference type="InterPro" id="IPR008991">
    <property type="entry name" value="Translation_prot_SH3-like_sf"/>
</dbReference>
<dbReference type="NCBIfam" id="TIGR00038">
    <property type="entry name" value="efp"/>
    <property type="match status" value="1"/>
</dbReference>
<dbReference type="NCBIfam" id="NF001810">
    <property type="entry name" value="PRK00529.1"/>
    <property type="match status" value="1"/>
</dbReference>
<dbReference type="PANTHER" id="PTHR30053">
    <property type="entry name" value="ELONGATION FACTOR P"/>
    <property type="match status" value="1"/>
</dbReference>
<dbReference type="PANTHER" id="PTHR30053:SF12">
    <property type="entry name" value="ELONGATION FACTOR P (EF-P) FAMILY PROTEIN"/>
    <property type="match status" value="1"/>
</dbReference>
<dbReference type="Pfam" id="PF01132">
    <property type="entry name" value="EFP"/>
    <property type="match status" value="1"/>
</dbReference>
<dbReference type="Pfam" id="PF08207">
    <property type="entry name" value="EFP_N"/>
    <property type="match status" value="1"/>
</dbReference>
<dbReference type="Pfam" id="PF09285">
    <property type="entry name" value="Elong-fact-P_C"/>
    <property type="match status" value="1"/>
</dbReference>
<dbReference type="PIRSF" id="PIRSF005901">
    <property type="entry name" value="EF-P"/>
    <property type="match status" value="1"/>
</dbReference>
<dbReference type="SMART" id="SM01185">
    <property type="entry name" value="EFP"/>
    <property type="match status" value="1"/>
</dbReference>
<dbReference type="SMART" id="SM00841">
    <property type="entry name" value="Elong-fact-P_C"/>
    <property type="match status" value="1"/>
</dbReference>
<dbReference type="SUPFAM" id="SSF50249">
    <property type="entry name" value="Nucleic acid-binding proteins"/>
    <property type="match status" value="2"/>
</dbReference>
<dbReference type="SUPFAM" id="SSF50104">
    <property type="entry name" value="Translation proteins SH3-like domain"/>
    <property type="match status" value="1"/>
</dbReference>
<dbReference type="PROSITE" id="PS01275">
    <property type="entry name" value="EFP"/>
    <property type="match status" value="1"/>
</dbReference>
<name>EFP_HYDS0</name>
<reference key="1">
    <citation type="journal article" date="2009" name="J. Bacteriol.">
        <title>Complete and draft genome sequences of six members of the Aquificales.</title>
        <authorList>
            <person name="Reysenbach A.-L."/>
            <person name="Hamamura N."/>
            <person name="Podar M."/>
            <person name="Griffiths E."/>
            <person name="Ferreira S."/>
            <person name="Hochstein R."/>
            <person name="Heidelberg J."/>
            <person name="Johnson J."/>
            <person name="Mead D."/>
            <person name="Pohorille A."/>
            <person name="Sarmiento M."/>
            <person name="Schweighofer K."/>
            <person name="Seshadri R."/>
            <person name="Voytek M.A."/>
        </authorList>
    </citation>
    <scope>NUCLEOTIDE SEQUENCE [LARGE SCALE GENOMIC DNA]</scope>
    <source>
        <strain>Y04AAS1</strain>
    </source>
</reference>
<evidence type="ECO:0000255" key="1">
    <source>
        <dbReference type="HAMAP-Rule" id="MF_00141"/>
    </source>
</evidence>
<protein>
    <recommendedName>
        <fullName evidence="1">Elongation factor P</fullName>
        <shortName evidence="1">EF-P</shortName>
    </recommendedName>
</protein>
<gene>
    <name evidence="1" type="primary">efp</name>
    <name type="ordered locus">HY04AAS1_0356</name>
</gene>
<organism>
    <name type="scientific">Hydrogenobaculum sp. (strain Y04AAS1)</name>
    <dbReference type="NCBI Taxonomy" id="380749"/>
    <lineage>
        <taxon>Bacteria</taxon>
        <taxon>Pseudomonadati</taxon>
        <taxon>Aquificota</taxon>
        <taxon>Aquificia</taxon>
        <taxon>Aquificales</taxon>
        <taxon>Aquificaceae</taxon>
        <taxon>Hydrogenobaculum</taxon>
    </lineage>
</organism>
<keyword id="KW-0963">Cytoplasm</keyword>
<keyword id="KW-0251">Elongation factor</keyword>
<keyword id="KW-0648">Protein biosynthesis</keyword>
<sequence length="194" mass="22007">MAEKIDINRIQRDMFIEYKGEPYRVVDYDHVKPGKGQAFVRVKAKNMNTGNAIEITYKSSDSIELADFEQVFAEFSYKDADEYHFLTQNTHEMISINAEDIKEEAKFLKEGMTVVVFIYKNKPIGIELPKAVELEVIETDPGFKGDTAAGGSKPAKLETGAVIQVPFFINEGDIVKVDTRTGQYLERLDRAQKK</sequence>
<accession>B4U7D5</accession>
<feature type="chain" id="PRO_1000096164" description="Elongation factor P">
    <location>
        <begin position="1"/>
        <end position="194"/>
    </location>
</feature>
<proteinExistence type="inferred from homology"/>